<protein>
    <recommendedName>
        <fullName evidence="1">Segregation and condensation protein B</fullName>
    </recommendedName>
</protein>
<accession>B8ZNB3</accession>
<gene>
    <name evidence="1" type="primary">scpB</name>
    <name type="ordered locus">SPN23F18880</name>
</gene>
<feature type="chain" id="PRO_1000187543" description="Segregation and condensation protein B">
    <location>
        <begin position="1"/>
        <end position="189"/>
    </location>
</feature>
<keyword id="KW-0131">Cell cycle</keyword>
<keyword id="KW-0132">Cell division</keyword>
<keyword id="KW-0159">Chromosome partition</keyword>
<keyword id="KW-0963">Cytoplasm</keyword>
<organism>
    <name type="scientific">Streptococcus pneumoniae (strain ATCC 700669 / Spain 23F-1)</name>
    <dbReference type="NCBI Taxonomy" id="561276"/>
    <lineage>
        <taxon>Bacteria</taxon>
        <taxon>Bacillati</taxon>
        <taxon>Bacillota</taxon>
        <taxon>Bacilli</taxon>
        <taxon>Lactobacillales</taxon>
        <taxon>Streptococcaceae</taxon>
        <taxon>Streptococcus</taxon>
    </lineage>
</organism>
<sequence>MSTLAKIEALLFVAGEDGIRVRQLAELLSLPPTGIQQSLGKLAQKYEKDPDSSLALIETSGAYRLVTKPQFAEILKEYSKAPINQSLSRAALETLSIIAYKQPITRIEIDAIRGVNSSGALAKLQAFDLIKEDGKKEVLGRPNLYVTTDYFLDYMGINHLEELPVIDELEIQAQESQLFGERIEEDENQ</sequence>
<dbReference type="EMBL" id="FM211187">
    <property type="protein sequence ID" value="CAR69650.1"/>
    <property type="molecule type" value="Genomic_DNA"/>
</dbReference>
<dbReference type="RefSeq" id="WP_000105310.1">
    <property type="nucleotide sequence ID" value="NC_011900.1"/>
</dbReference>
<dbReference type="SMR" id="B8ZNB3"/>
<dbReference type="GeneID" id="45219111"/>
<dbReference type="KEGG" id="sne:SPN23F18880"/>
<dbReference type="HOGENOM" id="CLU_045647_5_3_9"/>
<dbReference type="GO" id="GO:0005737">
    <property type="term" value="C:cytoplasm"/>
    <property type="evidence" value="ECO:0007669"/>
    <property type="project" value="UniProtKB-SubCell"/>
</dbReference>
<dbReference type="GO" id="GO:0051301">
    <property type="term" value="P:cell division"/>
    <property type="evidence" value="ECO:0007669"/>
    <property type="project" value="UniProtKB-KW"/>
</dbReference>
<dbReference type="GO" id="GO:0051304">
    <property type="term" value="P:chromosome separation"/>
    <property type="evidence" value="ECO:0007669"/>
    <property type="project" value="InterPro"/>
</dbReference>
<dbReference type="GO" id="GO:0006260">
    <property type="term" value="P:DNA replication"/>
    <property type="evidence" value="ECO:0007669"/>
    <property type="project" value="UniProtKB-UniRule"/>
</dbReference>
<dbReference type="FunFam" id="1.10.10.10:FF:000507">
    <property type="entry name" value="Segregation and condensation protein B"/>
    <property type="match status" value="1"/>
</dbReference>
<dbReference type="FunFam" id="1.10.10.10:FF:000508">
    <property type="entry name" value="Segregation and condensation protein B"/>
    <property type="match status" value="1"/>
</dbReference>
<dbReference type="Gene3D" id="1.10.10.10">
    <property type="entry name" value="Winged helix-like DNA-binding domain superfamily/Winged helix DNA-binding domain"/>
    <property type="match status" value="2"/>
</dbReference>
<dbReference type="HAMAP" id="MF_01804">
    <property type="entry name" value="ScpB"/>
    <property type="match status" value="1"/>
</dbReference>
<dbReference type="InterPro" id="IPR005234">
    <property type="entry name" value="ScpB_csome_segregation"/>
</dbReference>
<dbReference type="InterPro" id="IPR036388">
    <property type="entry name" value="WH-like_DNA-bd_sf"/>
</dbReference>
<dbReference type="InterPro" id="IPR036390">
    <property type="entry name" value="WH_DNA-bd_sf"/>
</dbReference>
<dbReference type="NCBIfam" id="TIGR00281">
    <property type="entry name" value="SMC-Scp complex subunit ScpB"/>
    <property type="match status" value="1"/>
</dbReference>
<dbReference type="PANTHER" id="PTHR34298">
    <property type="entry name" value="SEGREGATION AND CONDENSATION PROTEIN B"/>
    <property type="match status" value="1"/>
</dbReference>
<dbReference type="PANTHER" id="PTHR34298:SF2">
    <property type="entry name" value="SEGREGATION AND CONDENSATION PROTEIN B"/>
    <property type="match status" value="1"/>
</dbReference>
<dbReference type="Pfam" id="PF04079">
    <property type="entry name" value="SMC_ScpB"/>
    <property type="match status" value="1"/>
</dbReference>
<dbReference type="PIRSF" id="PIRSF019345">
    <property type="entry name" value="ScpB"/>
    <property type="match status" value="1"/>
</dbReference>
<dbReference type="SUPFAM" id="SSF46785">
    <property type="entry name" value="Winged helix' DNA-binding domain"/>
    <property type="match status" value="2"/>
</dbReference>
<proteinExistence type="inferred from homology"/>
<name>SCPB_STRPJ</name>
<reference key="1">
    <citation type="journal article" date="2009" name="J. Bacteriol.">
        <title>Role of conjugative elements in the evolution of the multidrug-resistant pandemic clone Streptococcus pneumoniae Spain23F ST81.</title>
        <authorList>
            <person name="Croucher N.J."/>
            <person name="Walker D."/>
            <person name="Romero P."/>
            <person name="Lennard N."/>
            <person name="Paterson G.K."/>
            <person name="Bason N.C."/>
            <person name="Mitchell A.M."/>
            <person name="Quail M.A."/>
            <person name="Andrew P.W."/>
            <person name="Parkhill J."/>
            <person name="Bentley S.D."/>
            <person name="Mitchell T.J."/>
        </authorList>
    </citation>
    <scope>NUCLEOTIDE SEQUENCE [LARGE SCALE GENOMIC DNA]</scope>
    <source>
        <strain>ATCC 700669 / Spain 23F-1</strain>
    </source>
</reference>
<evidence type="ECO:0000255" key="1">
    <source>
        <dbReference type="HAMAP-Rule" id="MF_01804"/>
    </source>
</evidence>
<comment type="function">
    <text evidence="1">Participates in chromosomal partition during cell division. May act via the formation of a condensin-like complex containing Smc and ScpA that pull DNA away from mid-cell into both cell halves.</text>
</comment>
<comment type="subunit">
    <text evidence="1">Homodimer. Homodimerization may be required to stabilize the binding of ScpA to the Smc head domains. Component of a cohesin-like complex composed of ScpA, ScpB and the Smc homodimer, in which ScpA and ScpB bind to the head domain of Smc. The presence of the three proteins is required for the association of the complex with DNA.</text>
</comment>
<comment type="subcellular location">
    <subcellularLocation>
        <location evidence="1">Cytoplasm</location>
    </subcellularLocation>
    <text evidence="1">Associated with two foci at the outer edges of the nucleoid region in young cells, and at four foci within both cell halves in older cells.</text>
</comment>
<comment type="similarity">
    <text evidence="1">Belongs to the ScpB family.</text>
</comment>